<gene>
    <name evidence="1" type="primary">sfsA</name>
    <name type="ordered locus">Tpet_0353</name>
</gene>
<organism>
    <name type="scientific">Thermotoga petrophila (strain ATCC BAA-488 / DSM 13995 / JCM 10881 / RKU-1)</name>
    <dbReference type="NCBI Taxonomy" id="390874"/>
    <lineage>
        <taxon>Bacteria</taxon>
        <taxon>Thermotogati</taxon>
        <taxon>Thermotogota</taxon>
        <taxon>Thermotogae</taxon>
        <taxon>Thermotogales</taxon>
        <taxon>Thermotogaceae</taxon>
        <taxon>Thermotoga</taxon>
    </lineage>
</organism>
<proteinExistence type="inferred from homology"/>
<reference key="1">
    <citation type="submission" date="2007-05" db="EMBL/GenBank/DDBJ databases">
        <title>Complete sequence of Thermotoga petrophila RKU-1.</title>
        <authorList>
            <consortium name="US DOE Joint Genome Institute"/>
            <person name="Copeland A."/>
            <person name="Lucas S."/>
            <person name="Lapidus A."/>
            <person name="Barry K."/>
            <person name="Glavina del Rio T."/>
            <person name="Dalin E."/>
            <person name="Tice H."/>
            <person name="Pitluck S."/>
            <person name="Sims D."/>
            <person name="Brettin T."/>
            <person name="Bruce D."/>
            <person name="Detter J.C."/>
            <person name="Han C."/>
            <person name="Tapia R."/>
            <person name="Schmutz J."/>
            <person name="Larimer F."/>
            <person name="Land M."/>
            <person name="Hauser L."/>
            <person name="Kyrpides N."/>
            <person name="Mikhailova N."/>
            <person name="Nelson K."/>
            <person name="Gogarten J.P."/>
            <person name="Noll K."/>
            <person name="Richardson P."/>
        </authorList>
    </citation>
    <scope>NUCLEOTIDE SEQUENCE [LARGE SCALE GENOMIC DNA]</scope>
    <source>
        <strain>ATCC BAA-488 / DSM 13995 / JCM 10881 / RKU-1</strain>
    </source>
</reference>
<comment type="similarity">
    <text evidence="1">Belongs to the SfsA family.</text>
</comment>
<dbReference type="EMBL" id="CP000702">
    <property type="protein sequence ID" value="ABQ46382.1"/>
    <property type="molecule type" value="Genomic_DNA"/>
</dbReference>
<dbReference type="RefSeq" id="WP_011943017.1">
    <property type="nucleotide sequence ID" value="NC_009486.1"/>
</dbReference>
<dbReference type="SMR" id="A5IJK9"/>
<dbReference type="STRING" id="390874.Tpet_0353"/>
<dbReference type="KEGG" id="tpt:Tpet_0353"/>
<dbReference type="eggNOG" id="COG1489">
    <property type="taxonomic scope" value="Bacteria"/>
</dbReference>
<dbReference type="HOGENOM" id="CLU_052299_1_0_0"/>
<dbReference type="Proteomes" id="UP000006558">
    <property type="component" value="Chromosome"/>
</dbReference>
<dbReference type="GO" id="GO:0003677">
    <property type="term" value="F:DNA binding"/>
    <property type="evidence" value="ECO:0007669"/>
    <property type="project" value="InterPro"/>
</dbReference>
<dbReference type="CDD" id="cd22357">
    <property type="entry name" value="SfsA-like"/>
    <property type="match status" value="1"/>
</dbReference>
<dbReference type="FunFam" id="2.40.50.580:FF:000002">
    <property type="entry name" value="Sugar fermentation stimulation protein homolog"/>
    <property type="match status" value="1"/>
</dbReference>
<dbReference type="Gene3D" id="2.40.50.580">
    <property type="match status" value="1"/>
</dbReference>
<dbReference type="Gene3D" id="3.40.1350.60">
    <property type="match status" value="1"/>
</dbReference>
<dbReference type="HAMAP" id="MF_00095">
    <property type="entry name" value="SfsA"/>
    <property type="match status" value="1"/>
</dbReference>
<dbReference type="InterPro" id="IPR005224">
    <property type="entry name" value="SfsA"/>
</dbReference>
<dbReference type="InterPro" id="IPR040452">
    <property type="entry name" value="SfsA_C"/>
</dbReference>
<dbReference type="InterPro" id="IPR041465">
    <property type="entry name" value="SfsA_N"/>
</dbReference>
<dbReference type="NCBIfam" id="TIGR00230">
    <property type="entry name" value="sfsA"/>
    <property type="match status" value="1"/>
</dbReference>
<dbReference type="PANTHER" id="PTHR30545">
    <property type="entry name" value="SUGAR FERMENTATION STIMULATION PROTEIN A"/>
    <property type="match status" value="1"/>
</dbReference>
<dbReference type="PANTHER" id="PTHR30545:SF2">
    <property type="entry name" value="SUGAR FERMENTATION STIMULATION PROTEIN A"/>
    <property type="match status" value="1"/>
</dbReference>
<dbReference type="Pfam" id="PF03749">
    <property type="entry name" value="SfsA"/>
    <property type="match status" value="1"/>
</dbReference>
<dbReference type="Pfam" id="PF17746">
    <property type="entry name" value="SfsA_N"/>
    <property type="match status" value="1"/>
</dbReference>
<feature type="chain" id="PRO_1000008041" description="Sugar fermentation stimulation protein homolog">
    <location>
        <begin position="1"/>
        <end position="222"/>
    </location>
</feature>
<evidence type="ECO:0000255" key="1">
    <source>
        <dbReference type="HAMAP-Rule" id="MF_00095"/>
    </source>
</evidence>
<protein>
    <recommendedName>
        <fullName evidence="1">Sugar fermentation stimulation protein homolog</fullName>
    </recommendedName>
</protein>
<name>SFSA_THEP1</name>
<sequence>MRLILPADTEGIFLERKSRFTGVALVEGKKTLIHIHNTGRLPLLKKGKRVLLKRAESDRRKTGWDLLAVEHRDEFVFVHSGFHSIVAGKILEELFPGSTIESEKRFENSRFDFLIDRRTFVEVKGCTYEEDGVAMFPDAPTERGRRHIEELISSVKSGFKALLLILVFLESDCFLPNRNVDPAFSRVFWRALKSGVNIDVFRVKYDGEYLCSTEKLSICEEV</sequence>
<accession>A5IJK9</accession>